<evidence type="ECO:0000250" key="1"/>
<evidence type="ECO:0000250" key="2">
    <source>
        <dbReference type="UniProtKB" id="O00144"/>
    </source>
</evidence>
<evidence type="ECO:0000250" key="3">
    <source>
        <dbReference type="UniProtKB" id="Q8K4C8"/>
    </source>
</evidence>
<evidence type="ECO:0000255" key="4"/>
<evidence type="ECO:0000255" key="5">
    <source>
        <dbReference type="PROSITE-ProRule" id="PRU00090"/>
    </source>
</evidence>
<evidence type="ECO:0000269" key="6">
    <source>
    </source>
</evidence>
<evidence type="ECO:0000269" key="7">
    <source>
    </source>
</evidence>
<evidence type="ECO:0000269" key="8">
    <source>
    </source>
</evidence>
<evidence type="ECO:0000269" key="9">
    <source>
    </source>
</evidence>
<evidence type="ECO:0000269" key="10">
    <source>
    </source>
</evidence>
<evidence type="ECO:0000305" key="11"/>
<feature type="signal peptide" evidence="4">
    <location>
        <begin position="1"/>
        <end position="23"/>
    </location>
</feature>
<feature type="chain" id="PRO_0000013004" description="Frizzled-9">
    <location>
        <begin position="24"/>
        <end position="592"/>
    </location>
</feature>
<feature type="topological domain" description="Extracellular">
    <location>
        <begin position="24"/>
        <end position="230"/>
    </location>
</feature>
<feature type="transmembrane region" description="Helical; Name=1" evidence="4">
    <location>
        <begin position="231"/>
        <end position="251"/>
    </location>
</feature>
<feature type="topological domain" description="Cytoplasmic" evidence="4">
    <location>
        <begin position="252"/>
        <end position="267"/>
    </location>
</feature>
<feature type="transmembrane region" description="Helical; Name=2" evidence="4">
    <location>
        <begin position="268"/>
        <end position="288"/>
    </location>
</feature>
<feature type="topological domain" description="Extracellular" evidence="4">
    <location>
        <begin position="289"/>
        <end position="316"/>
    </location>
</feature>
<feature type="transmembrane region" description="Helical; Name=3" evidence="4">
    <location>
        <begin position="317"/>
        <end position="337"/>
    </location>
</feature>
<feature type="topological domain" description="Cytoplasmic" evidence="4">
    <location>
        <begin position="338"/>
        <end position="356"/>
    </location>
</feature>
<feature type="transmembrane region" description="Helical; Name=4" evidence="4">
    <location>
        <begin position="357"/>
        <end position="377"/>
    </location>
</feature>
<feature type="topological domain" description="Extracellular" evidence="4">
    <location>
        <begin position="378"/>
        <end position="401"/>
    </location>
</feature>
<feature type="transmembrane region" description="Helical; Name=5" evidence="4">
    <location>
        <begin position="402"/>
        <end position="422"/>
    </location>
</feature>
<feature type="topological domain" description="Cytoplasmic" evidence="4">
    <location>
        <begin position="423"/>
        <end position="448"/>
    </location>
</feature>
<feature type="transmembrane region" description="Helical; Name=6" evidence="4">
    <location>
        <begin position="449"/>
        <end position="469"/>
    </location>
</feature>
<feature type="topological domain" description="Extracellular" evidence="4">
    <location>
        <begin position="470"/>
        <end position="509"/>
    </location>
</feature>
<feature type="transmembrane region" description="Helical; Name=7" evidence="4">
    <location>
        <begin position="510"/>
        <end position="530"/>
    </location>
</feature>
<feature type="topological domain" description="Cytoplasmic" evidence="4">
    <location>
        <begin position="531"/>
        <end position="592"/>
    </location>
</feature>
<feature type="domain" description="FZ" evidence="5">
    <location>
        <begin position="35"/>
        <end position="156"/>
    </location>
</feature>
<feature type="region of interest" description="Required for Wnt-activated receptor activity" evidence="3">
    <location>
        <begin position="59"/>
        <end position="173"/>
    </location>
</feature>
<feature type="region of interest" description="Required for CTNNB1 accumulation and TCF transcription factor activity" evidence="3">
    <location>
        <begin position="555"/>
        <end position="592"/>
    </location>
</feature>
<feature type="short sequence motif" description="Lys-Thr-X-X-X-Trp motif, mediates interaction with the PDZ domain of Dvl family members" evidence="1">
    <location>
        <begin position="533"/>
        <end position="538"/>
    </location>
</feature>
<feature type="glycosylation site" description="N-linked (GlcNAc...) asparagine" evidence="4">
    <location>
        <position position="54"/>
    </location>
</feature>
<feature type="glycosylation site" description="N-linked (GlcNAc...) asparagine" evidence="4">
    <location>
        <position position="159"/>
    </location>
</feature>
<feature type="disulfide bond" evidence="5">
    <location>
        <begin position="40"/>
        <end position="101"/>
    </location>
</feature>
<feature type="disulfide bond" evidence="5">
    <location>
        <begin position="48"/>
        <end position="94"/>
    </location>
</feature>
<feature type="disulfide bond" evidence="5">
    <location>
        <begin position="85"/>
        <end position="123"/>
    </location>
</feature>
<feature type="disulfide bond" evidence="5">
    <location>
        <begin position="112"/>
        <end position="153"/>
    </location>
</feature>
<feature type="disulfide bond" evidence="5">
    <location>
        <begin position="116"/>
        <end position="140"/>
    </location>
</feature>
<feature type="sequence conflict" description="In Ref. 3; AAB87503." evidence="11" ref="3">
    <original>S</original>
    <variation>P</variation>
    <location>
        <position position="66"/>
    </location>
</feature>
<feature type="sequence conflict" description="In Ref. 2; BAB32311." evidence="11" ref="2">
    <original>QL</original>
    <variation>HC</variation>
    <location>
        <begin position="73"/>
        <end position="74"/>
    </location>
</feature>
<feature type="sequence conflict" description="In Ref. 2; BAB32311." evidence="11" ref="2">
    <original>L</original>
    <variation>F</variation>
    <location>
        <position position="93"/>
    </location>
</feature>
<feature type="sequence conflict" description="In Ref. 4; CAB44237." evidence="11" ref="4">
    <original>P</original>
    <variation>S</variation>
    <location>
        <position position="144"/>
    </location>
</feature>
<feature type="sequence conflict" description="In Ref. 4; CAB44237." evidence="11" ref="4">
    <original>E</original>
    <variation>K</variation>
    <location>
        <position position="221"/>
    </location>
</feature>
<feature type="sequence conflict" description="In Ref. 4; CAB44237." evidence="11" ref="4">
    <original>A</original>
    <variation>P</variation>
    <location>
        <position position="237"/>
    </location>
</feature>
<feature type="sequence conflict" description="In Ref. 3; AAB87503." evidence="11" ref="3">
    <original>G</original>
    <variation>D</variation>
    <location>
        <position position="308"/>
    </location>
</feature>
<feature type="sequence conflict" description="In Ref. 4; CAB44237." evidence="11" ref="4">
    <original>V</original>
    <variation>F</variation>
    <location>
        <position position="374"/>
    </location>
</feature>
<feature type="sequence conflict" description="In Ref. 2; BAB32311." evidence="11" ref="2">
    <original>L</original>
    <variation>P</variation>
    <location>
        <position position="592"/>
    </location>
</feature>
<reference key="1">
    <citation type="journal article" date="1999" name="Genomics">
        <title>Characterization and expression pattern of the frizzled gene Fzd9, the mouse homolog of FZD9 which is deleted in Williams-Beuren syndrome.</title>
        <authorList>
            <person name="Wang Y.-K."/>
            <person name="Spoerle R."/>
            <person name="Paperna T."/>
            <person name="Schughart K."/>
            <person name="Francke U."/>
        </authorList>
    </citation>
    <scope>NUCLEOTIDE SEQUENCE [GENOMIC DNA]</scope>
    <scope>DEVELOPMENTAL STAGE</scope>
    <source>
        <strain>129/SvJ</strain>
        <tissue>Brain</tissue>
    </source>
</reference>
<reference key="2">
    <citation type="journal article" date="2005" name="Science">
        <title>The transcriptional landscape of the mammalian genome.</title>
        <authorList>
            <person name="Carninci P."/>
            <person name="Kasukawa T."/>
            <person name="Katayama S."/>
            <person name="Gough J."/>
            <person name="Frith M.C."/>
            <person name="Maeda N."/>
            <person name="Oyama R."/>
            <person name="Ravasi T."/>
            <person name="Lenhard B."/>
            <person name="Wells C."/>
            <person name="Kodzius R."/>
            <person name="Shimokawa K."/>
            <person name="Bajic V.B."/>
            <person name="Brenner S.E."/>
            <person name="Batalov S."/>
            <person name="Forrest A.R."/>
            <person name="Zavolan M."/>
            <person name="Davis M.J."/>
            <person name="Wilming L.G."/>
            <person name="Aidinis V."/>
            <person name="Allen J.E."/>
            <person name="Ambesi-Impiombato A."/>
            <person name="Apweiler R."/>
            <person name="Aturaliya R.N."/>
            <person name="Bailey T.L."/>
            <person name="Bansal M."/>
            <person name="Baxter L."/>
            <person name="Beisel K.W."/>
            <person name="Bersano T."/>
            <person name="Bono H."/>
            <person name="Chalk A.M."/>
            <person name="Chiu K.P."/>
            <person name="Choudhary V."/>
            <person name="Christoffels A."/>
            <person name="Clutterbuck D.R."/>
            <person name="Crowe M.L."/>
            <person name="Dalla E."/>
            <person name="Dalrymple B.P."/>
            <person name="de Bono B."/>
            <person name="Della Gatta G."/>
            <person name="di Bernardo D."/>
            <person name="Down T."/>
            <person name="Engstrom P."/>
            <person name="Fagiolini M."/>
            <person name="Faulkner G."/>
            <person name="Fletcher C.F."/>
            <person name="Fukushima T."/>
            <person name="Furuno M."/>
            <person name="Futaki S."/>
            <person name="Gariboldi M."/>
            <person name="Georgii-Hemming P."/>
            <person name="Gingeras T.R."/>
            <person name="Gojobori T."/>
            <person name="Green R.E."/>
            <person name="Gustincich S."/>
            <person name="Harbers M."/>
            <person name="Hayashi Y."/>
            <person name="Hensch T.K."/>
            <person name="Hirokawa N."/>
            <person name="Hill D."/>
            <person name="Huminiecki L."/>
            <person name="Iacono M."/>
            <person name="Ikeo K."/>
            <person name="Iwama A."/>
            <person name="Ishikawa T."/>
            <person name="Jakt M."/>
            <person name="Kanapin A."/>
            <person name="Katoh M."/>
            <person name="Kawasawa Y."/>
            <person name="Kelso J."/>
            <person name="Kitamura H."/>
            <person name="Kitano H."/>
            <person name="Kollias G."/>
            <person name="Krishnan S.P."/>
            <person name="Kruger A."/>
            <person name="Kummerfeld S.K."/>
            <person name="Kurochkin I.V."/>
            <person name="Lareau L.F."/>
            <person name="Lazarevic D."/>
            <person name="Lipovich L."/>
            <person name="Liu J."/>
            <person name="Liuni S."/>
            <person name="McWilliam S."/>
            <person name="Madan Babu M."/>
            <person name="Madera M."/>
            <person name="Marchionni L."/>
            <person name="Matsuda H."/>
            <person name="Matsuzawa S."/>
            <person name="Miki H."/>
            <person name="Mignone F."/>
            <person name="Miyake S."/>
            <person name="Morris K."/>
            <person name="Mottagui-Tabar S."/>
            <person name="Mulder N."/>
            <person name="Nakano N."/>
            <person name="Nakauchi H."/>
            <person name="Ng P."/>
            <person name="Nilsson R."/>
            <person name="Nishiguchi S."/>
            <person name="Nishikawa S."/>
            <person name="Nori F."/>
            <person name="Ohara O."/>
            <person name="Okazaki Y."/>
            <person name="Orlando V."/>
            <person name="Pang K.C."/>
            <person name="Pavan W.J."/>
            <person name="Pavesi G."/>
            <person name="Pesole G."/>
            <person name="Petrovsky N."/>
            <person name="Piazza S."/>
            <person name="Reed J."/>
            <person name="Reid J.F."/>
            <person name="Ring B.Z."/>
            <person name="Ringwald M."/>
            <person name="Rost B."/>
            <person name="Ruan Y."/>
            <person name="Salzberg S.L."/>
            <person name="Sandelin A."/>
            <person name="Schneider C."/>
            <person name="Schoenbach C."/>
            <person name="Sekiguchi K."/>
            <person name="Semple C.A."/>
            <person name="Seno S."/>
            <person name="Sessa L."/>
            <person name="Sheng Y."/>
            <person name="Shibata Y."/>
            <person name="Shimada H."/>
            <person name="Shimada K."/>
            <person name="Silva D."/>
            <person name="Sinclair B."/>
            <person name="Sperling S."/>
            <person name="Stupka E."/>
            <person name="Sugiura K."/>
            <person name="Sultana R."/>
            <person name="Takenaka Y."/>
            <person name="Taki K."/>
            <person name="Tammoja K."/>
            <person name="Tan S.L."/>
            <person name="Tang S."/>
            <person name="Taylor M.S."/>
            <person name="Tegner J."/>
            <person name="Teichmann S.A."/>
            <person name="Ueda H.R."/>
            <person name="van Nimwegen E."/>
            <person name="Verardo R."/>
            <person name="Wei C.L."/>
            <person name="Yagi K."/>
            <person name="Yamanishi H."/>
            <person name="Zabarovsky E."/>
            <person name="Zhu S."/>
            <person name="Zimmer A."/>
            <person name="Hide W."/>
            <person name="Bult C."/>
            <person name="Grimmond S.M."/>
            <person name="Teasdale R.D."/>
            <person name="Liu E.T."/>
            <person name="Brusic V."/>
            <person name="Quackenbush J."/>
            <person name="Wahlestedt C."/>
            <person name="Mattick J.S."/>
            <person name="Hume D.A."/>
            <person name="Kai C."/>
            <person name="Sasaki D."/>
            <person name="Tomaru Y."/>
            <person name="Fukuda S."/>
            <person name="Kanamori-Katayama M."/>
            <person name="Suzuki M."/>
            <person name="Aoki J."/>
            <person name="Arakawa T."/>
            <person name="Iida J."/>
            <person name="Imamura K."/>
            <person name="Itoh M."/>
            <person name="Kato T."/>
            <person name="Kawaji H."/>
            <person name="Kawagashira N."/>
            <person name="Kawashima T."/>
            <person name="Kojima M."/>
            <person name="Kondo S."/>
            <person name="Konno H."/>
            <person name="Nakano K."/>
            <person name="Ninomiya N."/>
            <person name="Nishio T."/>
            <person name="Okada M."/>
            <person name="Plessy C."/>
            <person name="Shibata K."/>
            <person name="Shiraki T."/>
            <person name="Suzuki S."/>
            <person name="Tagami M."/>
            <person name="Waki K."/>
            <person name="Watahiki A."/>
            <person name="Okamura-Oho Y."/>
            <person name="Suzuki H."/>
            <person name="Kawai J."/>
            <person name="Hayashizaki Y."/>
        </authorList>
    </citation>
    <scope>NUCLEOTIDE SEQUENCE [LARGE SCALE MRNA]</scope>
    <source>
        <strain>C57BL/6J</strain>
        <tissue>Embryonic head</tissue>
    </source>
</reference>
<reference key="3">
    <citation type="submission" date="1999-06" db="EMBL/GenBank/DDBJ databases">
        <title>A novel mouse frizzled gene expressed in early neural development.</title>
        <authorList>
            <person name="Van Raay T.J."/>
            <person name="Rasmussen J.T."/>
            <person name="Rao M.S."/>
        </authorList>
    </citation>
    <scope>NUCLEOTIDE SEQUENCE [GENOMIC DNA] OF 44-592</scope>
</reference>
<reference key="4">
    <citation type="submission" date="1998-07" db="EMBL/GenBank/DDBJ databases">
        <title>Localization of the mouse frizzled gene mFZD3 in the olfactory epithelium and in the vomeronasal organ.</title>
        <authorList>
            <person name="Calo L."/>
            <person name="Mimmack M.L."/>
            <person name="Keverne E.B."/>
            <person name="Emson P.C."/>
        </authorList>
    </citation>
    <scope>NUCLEOTIDE SEQUENCE [GENOMIC DNA] OF 144-592</scope>
    <source>
        <strain>BALB/cJ</strain>
    </source>
</reference>
<reference key="5">
    <citation type="journal article" date="2005" name="Development">
        <title>Hippocampal and visuospatial learning defects in mice with a deletion of frizzled 9, a gene in the Williams syndrome deletion interval.</title>
        <authorList>
            <person name="Zhao C."/>
            <person name="Aviles C."/>
            <person name="Abel R.A."/>
            <person name="Almli C.R."/>
            <person name="McQuillen P."/>
            <person name="Pleasure S.J."/>
        </authorList>
    </citation>
    <scope>DISRUPTION PHENOTYPE</scope>
    <scope>FUNCTION</scope>
</reference>
<reference key="6">
    <citation type="journal article" date="2011" name="J. Cell Biol.">
        <title>Control of bone formation by the serpentine receptor Frizzled-9.</title>
        <authorList>
            <person name="Albers J."/>
            <person name="Schulze J."/>
            <person name="Beil F.T."/>
            <person name="Gebauer M."/>
            <person name="Baranowsky A."/>
            <person name="Keller J."/>
            <person name="Marshall R.P."/>
            <person name="Wintges K."/>
            <person name="Friedrich F.W."/>
            <person name="Priemel M."/>
            <person name="Schilling A.F."/>
            <person name="Rueger J.M."/>
            <person name="Cornils K."/>
            <person name="Fehse B."/>
            <person name="Streichert T."/>
            <person name="Sauter G."/>
            <person name="Jakob F."/>
            <person name="Insogna K.L."/>
            <person name="Pober B."/>
            <person name="Knobeloch K.P."/>
            <person name="Francke U."/>
            <person name="Amling M."/>
            <person name="Schinke T."/>
        </authorList>
    </citation>
    <scope>INDUCTION</scope>
    <scope>FUNCTION</scope>
    <scope>DISRUPTION PHENOTYPE</scope>
</reference>
<reference key="7">
    <citation type="journal article" date="2013" name="PLoS ONE">
        <title>The Wnt serpentine receptor Frizzled-9 regulates new bone formation in fracture healing.</title>
        <authorList>
            <person name="Heilmann A."/>
            <person name="Schinke T."/>
            <person name="Bindl R."/>
            <person name="Wehner T."/>
            <person name="Rapp A."/>
            <person name="Haffner-Luntzer M."/>
            <person name="Nemitz C."/>
            <person name="Liedert A."/>
            <person name="Amling M."/>
            <person name="Ignatius A."/>
        </authorList>
    </citation>
    <scope>FUNCTION</scope>
</reference>
<reference key="8">
    <citation type="journal article" date="2014" name="Front. Cell. Neurosci.">
        <title>Frizzled-9 impairs acetylcholine receptor clustering in skeletal muscle cells.</title>
        <authorList>
            <person name="Aviles E.C."/>
            <person name="Pinto C."/>
            <person name="Hanna P."/>
            <person name="Ojeda J."/>
            <person name="Perez V."/>
            <person name="De Ferrari G.V."/>
            <person name="Zamorano P."/>
            <person name="Albistur M."/>
            <person name="Sandoval D."/>
            <person name="Henriquez J.P."/>
        </authorList>
    </citation>
    <scope>DEVELOPMENTAL STAGE</scope>
    <scope>FUNCTION</scope>
    <scope>SUBCELLULAR LOCATION</scope>
</reference>
<comment type="function">
    <text evidence="2 3 7 8 9 10">Receptor for WNT2 that is coupled to the beta-catenin canonical signaling pathway, which leads to the activation of disheveled proteins, inhibition of GSK-3 kinase, nuclear accumulation of beta-catenin and activation of Wnt target genes (By similarity). Plays a role in neuromuscular junction (NMJ) assembly by negatively regulating the clustering of acetylcholine receptors (AChR) through the beta-catenin canonical signaling pathway (PubMed:24860427). May play a role in neural progenitor cells (NPCs) viability through the beta-catenin canonical signaling pathway by negatively regulating cell cycle arrest leading to inhibition of neuron apoptotic process (By similarity). During hippocampal development, regulates neuroblast proliferation and apoptotic cell death (PubMed:15930120). Controls bone formation through non canonical Wnt signaling mediated via ISG15 (PubMed:21402791). Positively regulates bone regeneration through non canonical Wnt signaling (PubMed:24391920).</text>
</comment>
<comment type="subcellular location">
    <subcellularLocation>
        <location evidence="10">Cell membrane</location>
        <topology evidence="4">Multi-pass membrane protein</topology>
    </subcellularLocation>
    <text evidence="3">Relocalizes DVL1 to the cell membrane leading to phosphorylation of DVL1 and AXIN1 relocalization to the cell membrane.</text>
</comment>
<comment type="tissue specificity">
    <text>In the embryo, found in the neural tube, trunk skeletal muscle precursors (myotomes), limb skeletal anlagen, craniofacial regions and nephric ducts. In the adult, expression is abundant in heart, brain, testis and skeletal muscle. In the testis, expressed in all spermatogenic cell types. Lower levels in adult lung, liver and kidney. Barely detectable in spleen. Expressed also in chondrocytes.</text>
</comment>
<comment type="developmental stage">
    <text evidence="6">Not detected at 7 dpc, weakly at 11 dpc and strongly at 15 dpc and 17 dpc. Expression covers the entire neural tube at 9.5 dpc, decreases at 10.5 dpc and becomes detectable only in the lumbar to tail regions at 11.5 dpc. In the somites, expression begins at 10.5 dpc to become up-regulated all along the rostrocaudal trunk axis at 11.5 dpc. In craniofacial territories, expression is first detected at 11.5 dpc in restricted areas of the nose, the maxillar mandibular and second branchial arch anlagen. At 11.5 dpc, predominantly expressed in restricted areas of the nose, dorsally to the eye and in the caudal pharyngeal region. Highly expressed at early stages of neuromuscular junction assembly (14.5 dpc) and gradually decreases as development proceeds, being more than about 4-fold less expressed in 19.5 dpc.</text>
</comment>
<comment type="induction">
    <text evidence="8">Increases during the initial stages of osteoblast differentiation.</text>
</comment>
<comment type="domain">
    <text evidence="1">Lys-Thr-X-X-X-Trp motif interacts with the PDZ domain of Dvl (Disheveled) family members and is involved in the activation of the Wnt/beta-catenin signaling pathway.</text>
</comment>
<comment type="domain">
    <text evidence="1">The FZ domain is involved in binding with Wnt ligands.</text>
</comment>
<comment type="PTM">
    <text evidence="1">Ubiquitinated by ZNRF3, leading to its degradation by the proteasome.</text>
</comment>
<comment type="disruption phenotype">
    <text evidence="7 8">Homozygous Fzd9 knockout mice show deficits in spatial memory behaviors. Heterozygous and homozygous Fzd9 knockout mice appear healthy, develop normally, and are fertile (PubMed:15930120). Homozygous Fzd9 knockout mice display osteopenia (PubMed:21402791).</text>
</comment>
<comment type="similarity">
    <text evidence="11">Belongs to the G-protein coupled receptor Fz/Smo family.</text>
</comment>
<comment type="caution">
    <text evidence="11">Has been first described as FZD3 in literature.</text>
</comment>
<protein>
    <recommendedName>
        <fullName>Frizzled-9</fullName>
        <shortName>Fz-9</shortName>
        <shortName>mFz3</shortName>
        <shortName>mFz9</shortName>
    </recommendedName>
    <cdAntigenName>CD349</cdAntigenName>
</protein>
<name>FZD9_MOUSE</name>
<sequence>MAVPPLLRGALLLWQLLATGGAALEIGRFDPERGRGPAPCQAMEIPMCRGIGYNLTRMPNLLGHTSQGEAAAQLAEFSPLVQYGCHSHLRFFLCSLYAPMCTDQVSTPIPACRPMCEQARLRCAPIMEQFNFGWPDSLDCARLPTRNDPHALCMEAPENATAGPTEPHKGLGMLPVAPRPARPPGDSAPGPGSGGTCDNPEKFQYVEKSRSCAPRCGPGVEVFWSRRDKDFALVWMAVWSALCFFSTAFTVFTFLLEPHRFQYPERPIIFLSMCYNVYSLAFLIRAVAGAQSVACDQEAGALYVIQEGLENTGCTLVFLLLYYFGMASSLWWVVLTLTWFLAAGKKWGHEAIEAHGSYFHMAAWGLPALKTIVVLTLRKVAGDELTGLCYVASMDPAALTGFVLVPLSCYLVLGTSFLLTGFVALFHIRKIMKTGGTNTEKLEKLMVKIGVFSILYTVPATCVIVCYVYERLNMDFWRLRATEQPCTAATVPGGRRDCSLPGGSVPTVAVFMLKIFMSLVVGITSGVWVWSSKTFQTWQSLCYRKMAAGRARAKACRTPGGYGRGTHCHYKAPTVVLHMTKTDPSLENPTHL</sequence>
<keyword id="KW-1003">Cell membrane</keyword>
<keyword id="KW-0217">Developmental protein</keyword>
<keyword id="KW-1015">Disulfide bond</keyword>
<keyword id="KW-0297">G-protein coupled receptor</keyword>
<keyword id="KW-0325">Glycoprotein</keyword>
<keyword id="KW-0472">Membrane</keyword>
<keyword id="KW-0675">Receptor</keyword>
<keyword id="KW-1185">Reference proteome</keyword>
<keyword id="KW-0732">Signal</keyword>
<keyword id="KW-0807">Transducer</keyword>
<keyword id="KW-0812">Transmembrane</keyword>
<keyword id="KW-1133">Transmembrane helix</keyword>
<keyword id="KW-0832">Ubl conjugation</keyword>
<keyword id="KW-0879">Wnt signaling pathway</keyword>
<organism>
    <name type="scientific">Mus musculus</name>
    <name type="common">Mouse</name>
    <dbReference type="NCBI Taxonomy" id="10090"/>
    <lineage>
        <taxon>Eukaryota</taxon>
        <taxon>Metazoa</taxon>
        <taxon>Chordata</taxon>
        <taxon>Craniata</taxon>
        <taxon>Vertebrata</taxon>
        <taxon>Euteleostomi</taxon>
        <taxon>Mammalia</taxon>
        <taxon>Eutheria</taxon>
        <taxon>Euarchontoglires</taxon>
        <taxon>Glires</taxon>
        <taxon>Rodentia</taxon>
        <taxon>Myomorpha</taxon>
        <taxon>Muroidea</taxon>
        <taxon>Muridae</taxon>
        <taxon>Murinae</taxon>
        <taxon>Mus</taxon>
        <taxon>Mus</taxon>
    </lineage>
</organism>
<dbReference type="EMBL" id="AF088850">
    <property type="protein sequence ID" value="AAD27789.1"/>
    <property type="molecule type" value="Genomic_DNA"/>
</dbReference>
<dbReference type="EMBL" id="AK021164">
    <property type="protein sequence ID" value="BAB32311.1"/>
    <property type="molecule type" value="mRNA"/>
</dbReference>
<dbReference type="EMBL" id="AF033585">
    <property type="protein sequence ID" value="AAB87503.2"/>
    <property type="molecule type" value="mRNA"/>
</dbReference>
<dbReference type="EMBL" id="Y17709">
    <property type="protein sequence ID" value="CAB44237.1"/>
    <property type="molecule type" value="mRNA"/>
</dbReference>
<dbReference type="CCDS" id="CCDS51661.1"/>
<dbReference type="RefSeq" id="NP_034376.1">
    <property type="nucleotide sequence ID" value="NM_010246.1"/>
</dbReference>
<dbReference type="SMR" id="Q9R216"/>
<dbReference type="FunCoup" id="Q9R216">
    <property type="interactions" value="462"/>
</dbReference>
<dbReference type="IntAct" id="Q9R216">
    <property type="interactions" value="2"/>
</dbReference>
<dbReference type="STRING" id="10090.ENSMUSP00000053551"/>
<dbReference type="GlyCosmos" id="Q9R216">
    <property type="glycosylation" value="2 sites, No reported glycans"/>
</dbReference>
<dbReference type="GlyGen" id="Q9R216">
    <property type="glycosylation" value="3 sites, 2 N-linked glycans (2 sites)"/>
</dbReference>
<dbReference type="iPTMnet" id="Q9R216"/>
<dbReference type="PhosphoSitePlus" id="Q9R216"/>
<dbReference type="PaxDb" id="10090-ENSMUSP00000053551"/>
<dbReference type="ProteomicsDB" id="273401"/>
<dbReference type="Antibodypedia" id="14305">
    <property type="antibodies" value="524 antibodies from 37 providers"/>
</dbReference>
<dbReference type="Ensembl" id="ENSMUST00000062572.3">
    <property type="protein sequence ID" value="ENSMUSP00000053551.3"/>
    <property type="gene ID" value="ENSMUSG00000049551.3"/>
</dbReference>
<dbReference type="GeneID" id="14371"/>
<dbReference type="KEGG" id="mmu:14371"/>
<dbReference type="UCSC" id="uc008zya.2">
    <property type="organism name" value="mouse"/>
</dbReference>
<dbReference type="AGR" id="MGI:1313278"/>
<dbReference type="CTD" id="8326"/>
<dbReference type="MGI" id="MGI:1313278">
    <property type="gene designation" value="Fzd9"/>
</dbReference>
<dbReference type="VEuPathDB" id="HostDB:ENSMUSG00000049551"/>
<dbReference type="eggNOG" id="KOG3577">
    <property type="taxonomic scope" value="Eukaryota"/>
</dbReference>
<dbReference type="GeneTree" id="ENSGT00940000161226"/>
<dbReference type="HOGENOM" id="CLU_007873_2_1_1"/>
<dbReference type="InParanoid" id="Q9R216"/>
<dbReference type="OMA" id="VAYGCHG"/>
<dbReference type="OrthoDB" id="5959102at2759"/>
<dbReference type="PhylomeDB" id="Q9R216"/>
<dbReference type="TreeFam" id="TF317907"/>
<dbReference type="BioGRID-ORCS" id="14371">
    <property type="hits" value="0 hits in 78 CRISPR screens"/>
</dbReference>
<dbReference type="ChiTaRS" id="Fzd3">
    <property type="organism name" value="mouse"/>
</dbReference>
<dbReference type="PRO" id="PR:Q9R216"/>
<dbReference type="Proteomes" id="UP000000589">
    <property type="component" value="Chromosome 5"/>
</dbReference>
<dbReference type="RNAct" id="Q9R216">
    <property type="molecule type" value="protein"/>
</dbReference>
<dbReference type="Bgee" id="ENSMUSG00000049551">
    <property type="expression patterns" value="Expressed in rib and 166 other cell types or tissues"/>
</dbReference>
<dbReference type="GO" id="GO:0009986">
    <property type="term" value="C:cell surface"/>
    <property type="evidence" value="ECO:0007669"/>
    <property type="project" value="Ensembl"/>
</dbReference>
<dbReference type="GO" id="GO:0005789">
    <property type="term" value="C:endoplasmic reticulum membrane"/>
    <property type="evidence" value="ECO:0000250"/>
    <property type="project" value="UniProtKB"/>
</dbReference>
<dbReference type="GO" id="GO:0031527">
    <property type="term" value="C:filopodium membrane"/>
    <property type="evidence" value="ECO:0000314"/>
    <property type="project" value="MGI"/>
</dbReference>
<dbReference type="GO" id="GO:0005794">
    <property type="term" value="C:Golgi apparatus"/>
    <property type="evidence" value="ECO:0000250"/>
    <property type="project" value="UniProtKB"/>
</dbReference>
<dbReference type="GO" id="GO:0031966">
    <property type="term" value="C:mitochondrial membrane"/>
    <property type="evidence" value="ECO:0000250"/>
    <property type="project" value="UniProtKB"/>
</dbReference>
<dbReference type="GO" id="GO:0048471">
    <property type="term" value="C:perinuclear region of cytoplasm"/>
    <property type="evidence" value="ECO:0000314"/>
    <property type="project" value="MGI"/>
</dbReference>
<dbReference type="GO" id="GO:0005886">
    <property type="term" value="C:plasma membrane"/>
    <property type="evidence" value="ECO:0000314"/>
    <property type="project" value="UniProtKB"/>
</dbReference>
<dbReference type="GO" id="GO:0004930">
    <property type="term" value="F:G protein-coupled receptor activity"/>
    <property type="evidence" value="ECO:0007669"/>
    <property type="project" value="UniProtKB-KW"/>
</dbReference>
<dbReference type="GO" id="GO:0046982">
    <property type="term" value="F:protein heterodimerization activity"/>
    <property type="evidence" value="ECO:0007669"/>
    <property type="project" value="Ensembl"/>
</dbReference>
<dbReference type="GO" id="GO:0042803">
    <property type="term" value="F:protein homodimerization activity"/>
    <property type="evidence" value="ECO:0007669"/>
    <property type="project" value="Ensembl"/>
</dbReference>
<dbReference type="GO" id="GO:0042813">
    <property type="term" value="F:Wnt receptor activity"/>
    <property type="evidence" value="ECO:0000314"/>
    <property type="project" value="UniProtKB"/>
</dbReference>
<dbReference type="GO" id="GO:0017147">
    <property type="term" value="F:Wnt-protein binding"/>
    <property type="evidence" value="ECO:0007669"/>
    <property type="project" value="Ensembl"/>
</dbReference>
<dbReference type="GO" id="GO:0030183">
    <property type="term" value="P:B cell differentiation"/>
    <property type="evidence" value="ECO:0000315"/>
    <property type="project" value="MGI"/>
</dbReference>
<dbReference type="GO" id="GO:1990523">
    <property type="term" value="P:bone regeneration"/>
    <property type="evidence" value="ECO:0000315"/>
    <property type="project" value="UniProtKB"/>
</dbReference>
<dbReference type="GO" id="GO:0007611">
    <property type="term" value="P:learning or memory"/>
    <property type="evidence" value="ECO:0000315"/>
    <property type="project" value="MGI"/>
</dbReference>
<dbReference type="GO" id="GO:0051902">
    <property type="term" value="P:negative regulation of mitochondrial depolarization"/>
    <property type="evidence" value="ECO:0000250"/>
    <property type="project" value="UniProtKB"/>
</dbReference>
<dbReference type="GO" id="GO:1901029">
    <property type="term" value="P:negative regulation of mitochondrial outer membrane permeabilization involved in apoptotic signaling pathway"/>
    <property type="evidence" value="ECO:0000250"/>
    <property type="project" value="UniProtKB"/>
</dbReference>
<dbReference type="GO" id="GO:0060546">
    <property type="term" value="P:negative regulation of necroptotic process"/>
    <property type="evidence" value="ECO:0000250"/>
    <property type="project" value="UniProtKB"/>
</dbReference>
<dbReference type="GO" id="GO:0043524">
    <property type="term" value="P:negative regulation of neuron apoptotic process"/>
    <property type="evidence" value="ECO:0000250"/>
    <property type="project" value="UniProtKB"/>
</dbReference>
<dbReference type="GO" id="GO:1904394">
    <property type="term" value="P:negative regulation of skeletal muscle acetylcholine-gated channel clustering"/>
    <property type="evidence" value="ECO:0000315"/>
    <property type="project" value="UniProtKB"/>
</dbReference>
<dbReference type="GO" id="GO:0007405">
    <property type="term" value="P:neuroblast proliferation"/>
    <property type="evidence" value="ECO:0000315"/>
    <property type="project" value="MGI"/>
</dbReference>
<dbReference type="GO" id="GO:0001503">
    <property type="term" value="P:ossification"/>
    <property type="evidence" value="ECO:0000315"/>
    <property type="project" value="UniProtKB"/>
</dbReference>
<dbReference type="GO" id="GO:0043065">
    <property type="term" value="P:positive regulation of apoptotic process"/>
    <property type="evidence" value="ECO:0000250"/>
    <property type="project" value="UniProtKB"/>
</dbReference>
<dbReference type="GO" id="GO:0030501">
    <property type="term" value="P:positive regulation of bone mineralization"/>
    <property type="evidence" value="ECO:0000315"/>
    <property type="project" value="UniProtKB"/>
</dbReference>
<dbReference type="GO" id="GO:0090263">
    <property type="term" value="P:positive regulation of canonical Wnt signaling pathway"/>
    <property type="evidence" value="ECO:0000315"/>
    <property type="project" value="UniProtKB"/>
</dbReference>
<dbReference type="GO" id="GO:2000179">
    <property type="term" value="P:positive regulation of neural precursor cell proliferation"/>
    <property type="evidence" value="ECO:0000250"/>
    <property type="project" value="UniProtKB"/>
</dbReference>
<dbReference type="GO" id="GO:0051726">
    <property type="term" value="P:regulation of cell cycle"/>
    <property type="evidence" value="ECO:0000250"/>
    <property type="project" value="UniProtKB"/>
</dbReference>
<dbReference type="GO" id="GO:0051480">
    <property type="term" value="P:regulation of cytosolic calcium ion concentration"/>
    <property type="evidence" value="ECO:0000250"/>
    <property type="project" value="UniProtKB"/>
</dbReference>
<dbReference type="GO" id="GO:1904393">
    <property type="term" value="P:regulation of skeletal muscle acetylcholine-gated channel clustering"/>
    <property type="evidence" value="ECO:0000314"/>
    <property type="project" value="UniProtKB"/>
</dbReference>
<dbReference type="GO" id="GO:0001836">
    <property type="term" value="P:release of cytochrome c from mitochondria"/>
    <property type="evidence" value="ECO:0000250"/>
    <property type="project" value="UniProtKB"/>
</dbReference>
<dbReference type="CDD" id="cd15036">
    <property type="entry name" value="7tmF_FZD9"/>
    <property type="match status" value="1"/>
</dbReference>
<dbReference type="CDD" id="cd07463">
    <property type="entry name" value="CRD_FZ9"/>
    <property type="match status" value="1"/>
</dbReference>
<dbReference type="FunFam" id="1.10.2000.10:FF:000007">
    <property type="entry name" value="Frizzled class receptor 10"/>
    <property type="match status" value="1"/>
</dbReference>
<dbReference type="FunFam" id="1.20.1070.10:FF:000020">
    <property type="entry name" value="Frizzled class receptor 10"/>
    <property type="match status" value="1"/>
</dbReference>
<dbReference type="Gene3D" id="1.10.2000.10">
    <property type="entry name" value="Frizzled cysteine-rich domain"/>
    <property type="match status" value="1"/>
</dbReference>
<dbReference type="Gene3D" id="1.20.1070.10">
    <property type="entry name" value="Rhodopsin 7-helix transmembrane proteins"/>
    <property type="match status" value="1"/>
</dbReference>
<dbReference type="InterPro" id="IPR015526">
    <property type="entry name" value="Frizzled/SFRP"/>
</dbReference>
<dbReference type="InterPro" id="IPR000539">
    <property type="entry name" value="Frizzled/Smoothened_7TM"/>
</dbReference>
<dbReference type="InterPro" id="IPR020067">
    <property type="entry name" value="Frizzled_dom"/>
</dbReference>
<dbReference type="InterPro" id="IPR036790">
    <property type="entry name" value="Frizzled_dom_sf"/>
</dbReference>
<dbReference type="InterPro" id="IPR041777">
    <property type="entry name" value="FZ9_CRD"/>
</dbReference>
<dbReference type="InterPro" id="IPR017981">
    <property type="entry name" value="GPCR_2-like_7TM"/>
</dbReference>
<dbReference type="PANTHER" id="PTHR11309">
    <property type="entry name" value="FRIZZLED"/>
    <property type="match status" value="1"/>
</dbReference>
<dbReference type="PANTHER" id="PTHR11309:SF79">
    <property type="entry name" value="FRIZZLED-9"/>
    <property type="match status" value="1"/>
</dbReference>
<dbReference type="Pfam" id="PF01534">
    <property type="entry name" value="Frizzled"/>
    <property type="match status" value="1"/>
</dbReference>
<dbReference type="Pfam" id="PF01392">
    <property type="entry name" value="Fz"/>
    <property type="match status" value="1"/>
</dbReference>
<dbReference type="PRINTS" id="PR00489">
    <property type="entry name" value="FRIZZLED"/>
</dbReference>
<dbReference type="SMART" id="SM00063">
    <property type="entry name" value="FRI"/>
    <property type="match status" value="1"/>
</dbReference>
<dbReference type="SMART" id="SM01330">
    <property type="entry name" value="Frizzled"/>
    <property type="match status" value="1"/>
</dbReference>
<dbReference type="SUPFAM" id="SSF63501">
    <property type="entry name" value="Frizzled cysteine-rich domain"/>
    <property type="match status" value="1"/>
</dbReference>
<dbReference type="PROSITE" id="PS50038">
    <property type="entry name" value="FZ"/>
    <property type="match status" value="1"/>
</dbReference>
<dbReference type="PROSITE" id="PS50261">
    <property type="entry name" value="G_PROTEIN_RECEP_F2_4"/>
    <property type="match status" value="1"/>
</dbReference>
<proteinExistence type="evidence at transcript level"/>
<gene>
    <name type="primary">Fzd9</name>
    <name type="synonym">Fzd3</name>
</gene>
<accession>Q9R216</accession>
<accession>O35494</accession>
<accession>Q9CX16</accession>
<accession>Q9R2B3</accession>